<keyword id="KW-0131">Cell cycle</keyword>
<keyword id="KW-0132">Cell division</keyword>
<keyword id="KW-0997">Cell inner membrane</keyword>
<keyword id="KW-1003">Cell membrane</keyword>
<keyword id="KW-0133">Cell shape</keyword>
<keyword id="KW-0961">Cell wall biogenesis/degradation</keyword>
<keyword id="KW-0328">Glycosyltransferase</keyword>
<keyword id="KW-0472">Membrane</keyword>
<keyword id="KW-0573">Peptidoglycan synthesis</keyword>
<keyword id="KW-0808">Transferase</keyword>
<name>MURG_ECO5E</name>
<sequence>MSAQGKRLMVMAGGTGGHVFPGLAVAHHLMAQGWQVRWLGTADRMEADLVPKHGIEIDFIRISGLRGKGIKALIAAPLRIFNAWRQARAIMKAYKPDVVLGMGGYVSGPGGLAAWSLGIPVVLHEQNGIAGLTNKWLAKIATKVMQAFPGAFPNAEVVGNPVRTDVLALPLPQQRLAGREGPVRVLVVGGSQGARILNQTMPQVAAKLGDSVTIWHQSGKGSQQSVEQAYAEAGQPQHKVTEFIDDMAAAYAWADVVVCRSGALTVSEIAAAGLPALFVPFQHKDRQQYWNALPLEKAGAAKIIEQPQLSVDAVANTLAGWSRETLLTMAERARAASIPDATERVANEVSRAARA</sequence>
<feature type="chain" id="PRO_1000090428" description="UDP-N-acetylglucosamine--N-acetylmuramyl-(pentapeptide) pyrophosphoryl-undecaprenol N-acetylglucosamine transferase">
    <location>
        <begin position="1"/>
        <end position="355"/>
    </location>
</feature>
<feature type="binding site" evidence="1">
    <location>
        <begin position="15"/>
        <end position="17"/>
    </location>
    <ligand>
        <name>UDP-N-acetyl-alpha-D-glucosamine</name>
        <dbReference type="ChEBI" id="CHEBI:57705"/>
    </ligand>
</feature>
<feature type="binding site" evidence="1">
    <location>
        <position position="127"/>
    </location>
    <ligand>
        <name>UDP-N-acetyl-alpha-D-glucosamine</name>
        <dbReference type="ChEBI" id="CHEBI:57705"/>
    </ligand>
</feature>
<feature type="binding site" evidence="1">
    <location>
        <position position="163"/>
    </location>
    <ligand>
        <name>UDP-N-acetyl-alpha-D-glucosamine</name>
        <dbReference type="ChEBI" id="CHEBI:57705"/>
    </ligand>
</feature>
<feature type="binding site" evidence="1">
    <location>
        <position position="191"/>
    </location>
    <ligand>
        <name>UDP-N-acetyl-alpha-D-glucosamine</name>
        <dbReference type="ChEBI" id="CHEBI:57705"/>
    </ligand>
</feature>
<feature type="binding site" evidence="1">
    <location>
        <position position="244"/>
    </location>
    <ligand>
        <name>UDP-N-acetyl-alpha-D-glucosamine</name>
        <dbReference type="ChEBI" id="CHEBI:57705"/>
    </ligand>
</feature>
<feature type="binding site" evidence="1">
    <location>
        <begin position="263"/>
        <end position="268"/>
    </location>
    <ligand>
        <name>UDP-N-acetyl-alpha-D-glucosamine</name>
        <dbReference type="ChEBI" id="CHEBI:57705"/>
    </ligand>
</feature>
<feature type="binding site" evidence="1">
    <location>
        <position position="288"/>
    </location>
    <ligand>
        <name>UDP-N-acetyl-alpha-D-glucosamine</name>
        <dbReference type="ChEBI" id="CHEBI:57705"/>
    </ligand>
</feature>
<protein>
    <recommendedName>
        <fullName evidence="1">UDP-N-acetylglucosamine--N-acetylmuramyl-(pentapeptide) pyrophosphoryl-undecaprenol N-acetylglucosamine transferase</fullName>
        <ecNumber evidence="1">2.4.1.227</ecNumber>
    </recommendedName>
    <alternativeName>
        <fullName evidence="1">Undecaprenyl-PP-MurNAc-pentapeptide-UDPGlcNAc GlcNAc transferase</fullName>
    </alternativeName>
</protein>
<organism>
    <name type="scientific">Escherichia coli O157:H7 (strain EC4115 / EHEC)</name>
    <dbReference type="NCBI Taxonomy" id="444450"/>
    <lineage>
        <taxon>Bacteria</taxon>
        <taxon>Pseudomonadati</taxon>
        <taxon>Pseudomonadota</taxon>
        <taxon>Gammaproteobacteria</taxon>
        <taxon>Enterobacterales</taxon>
        <taxon>Enterobacteriaceae</taxon>
        <taxon>Escherichia</taxon>
    </lineage>
</organism>
<evidence type="ECO:0000255" key="1">
    <source>
        <dbReference type="HAMAP-Rule" id="MF_00033"/>
    </source>
</evidence>
<proteinExistence type="inferred from homology"/>
<reference key="1">
    <citation type="journal article" date="2011" name="Proc. Natl. Acad. Sci. U.S.A.">
        <title>Genomic anatomy of Escherichia coli O157:H7 outbreaks.</title>
        <authorList>
            <person name="Eppinger M."/>
            <person name="Mammel M.K."/>
            <person name="Leclerc J.E."/>
            <person name="Ravel J."/>
            <person name="Cebula T.A."/>
        </authorList>
    </citation>
    <scope>NUCLEOTIDE SEQUENCE [LARGE SCALE GENOMIC DNA]</scope>
    <source>
        <strain>EC4115 / EHEC</strain>
    </source>
</reference>
<dbReference type="EC" id="2.4.1.227" evidence="1"/>
<dbReference type="EMBL" id="CP001164">
    <property type="protein sequence ID" value="ACI36340.1"/>
    <property type="molecule type" value="Genomic_DNA"/>
</dbReference>
<dbReference type="RefSeq" id="WP_001275836.1">
    <property type="nucleotide sequence ID" value="NC_011353.1"/>
</dbReference>
<dbReference type="SMR" id="B5YZC6"/>
<dbReference type="CAZy" id="GT28">
    <property type="family name" value="Glycosyltransferase Family 28"/>
</dbReference>
<dbReference type="KEGG" id="ecf:ECH74115_0098"/>
<dbReference type="HOGENOM" id="CLU_037404_2_0_6"/>
<dbReference type="UniPathway" id="UPA00219"/>
<dbReference type="GO" id="GO:0005886">
    <property type="term" value="C:plasma membrane"/>
    <property type="evidence" value="ECO:0007669"/>
    <property type="project" value="UniProtKB-SubCell"/>
</dbReference>
<dbReference type="GO" id="GO:0051991">
    <property type="term" value="F:UDP-N-acetyl-D-glucosamine:N-acetylmuramoyl-L-alanyl-D-glutamyl-meso-2,6-diaminopimelyl-D-alanyl-D-alanine-diphosphoundecaprenol 4-beta-N-acetylglucosaminlytransferase activity"/>
    <property type="evidence" value="ECO:0007669"/>
    <property type="project" value="RHEA"/>
</dbReference>
<dbReference type="GO" id="GO:0050511">
    <property type="term" value="F:undecaprenyldiphospho-muramoylpentapeptide beta-N-acetylglucosaminyltransferase activity"/>
    <property type="evidence" value="ECO:0007669"/>
    <property type="project" value="UniProtKB-UniRule"/>
</dbReference>
<dbReference type="GO" id="GO:0005975">
    <property type="term" value="P:carbohydrate metabolic process"/>
    <property type="evidence" value="ECO:0007669"/>
    <property type="project" value="InterPro"/>
</dbReference>
<dbReference type="GO" id="GO:0051301">
    <property type="term" value="P:cell division"/>
    <property type="evidence" value="ECO:0007669"/>
    <property type="project" value="UniProtKB-KW"/>
</dbReference>
<dbReference type="GO" id="GO:0071555">
    <property type="term" value="P:cell wall organization"/>
    <property type="evidence" value="ECO:0007669"/>
    <property type="project" value="UniProtKB-KW"/>
</dbReference>
<dbReference type="GO" id="GO:0030259">
    <property type="term" value="P:lipid glycosylation"/>
    <property type="evidence" value="ECO:0007669"/>
    <property type="project" value="UniProtKB-UniRule"/>
</dbReference>
<dbReference type="GO" id="GO:0009252">
    <property type="term" value="P:peptidoglycan biosynthetic process"/>
    <property type="evidence" value="ECO:0007669"/>
    <property type="project" value="UniProtKB-UniRule"/>
</dbReference>
<dbReference type="GO" id="GO:0008360">
    <property type="term" value="P:regulation of cell shape"/>
    <property type="evidence" value="ECO:0007669"/>
    <property type="project" value="UniProtKB-KW"/>
</dbReference>
<dbReference type="CDD" id="cd03785">
    <property type="entry name" value="GT28_MurG"/>
    <property type="match status" value="1"/>
</dbReference>
<dbReference type="FunFam" id="3.40.50.2000:FF:000016">
    <property type="entry name" value="UDP-N-acetylglucosamine--N-acetylmuramyl-(pentapeptide) pyrophosphoryl-undecaprenol N-acetylglucosamine transferase"/>
    <property type="match status" value="1"/>
</dbReference>
<dbReference type="FunFam" id="3.40.50.2000:FF:000018">
    <property type="entry name" value="UDP-N-acetylglucosamine--N-acetylmuramyl-(pentapeptide) pyrophosphoryl-undecaprenol N-acetylglucosamine transferase"/>
    <property type="match status" value="1"/>
</dbReference>
<dbReference type="Gene3D" id="3.40.50.2000">
    <property type="entry name" value="Glycogen Phosphorylase B"/>
    <property type="match status" value="2"/>
</dbReference>
<dbReference type="HAMAP" id="MF_00033">
    <property type="entry name" value="MurG"/>
    <property type="match status" value="1"/>
</dbReference>
<dbReference type="InterPro" id="IPR006009">
    <property type="entry name" value="GlcNAc_MurG"/>
</dbReference>
<dbReference type="InterPro" id="IPR007235">
    <property type="entry name" value="Glyco_trans_28_C"/>
</dbReference>
<dbReference type="InterPro" id="IPR004276">
    <property type="entry name" value="GlycoTrans_28_N"/>
</dbReference>
<dbReference type="NCBIfam" id="TIGR01133">
    <property type="entry name" value="murG"/>
    <property type="match status" value="1"/>
</dbReference>
<dbReference type="PANTHER" id="PTHR21015:SF22">
    <property type="entry name" value="GLYCOSYLTRANSFERASE"/>
    <property type="match status" value="1"/>
</dbReference>
<dbReference type="PANTHER" id="PTHR21015">
    <property type="entry name" value="UDP-N-ACETYLGLUCOSAMINE--N-ACETYLMURAMYL-(PENTAPEPTIDE) PYROPHOSPHORYL-UNDECAPRENOL N-ACETYLGLUCOSAMINE TRANSFERASE 1"/>
    <property type="match status" value="1"/>
</dbReference>
<dbReference type="Pfam" id="PF04101">
    <property type="entry name" value="Glyco_tran_28_C"/>
    <property type="match status" value="1"/>
</dbReference>
<dbReference type="Pfam" id="PF03033">
    <property type="entry name" value="Glyco_transf_28"/>
    <property type="match status" value="1"/>
</dbReference>
<dbReference type="SUPFAM" id="SSF53756">
    <property type="entry name" value="UDP-Glycosyltransferase/glycogen phosphorylase"/>
    <property type="match status" value="1"/>
</dbReference>
<gene>
    <name evidence="1" type="primary">murG</name>
    <name type="ordered locus">ECH74115_0098</name>
</gene>
<accession>B5YZC6</accession>
<comment type="function">
    <text evidence="1">Cell wall formation. Catalyzes the transfer of a GlcNAc subunit on undecaprenyl-pyrophosphoryl-MurNAc-pentapeptide (lipid intermediate I) to form undecaprenyl-pyrophosphoryl-MurNAc-(pentapeptide)GlcNAc (lipid intermediate II).</text>
</comment>
<comment type="catalytic activity">
    <reaction evidence="1">
        <text>di-trans,octa-cis-undecaprenyl diphospho-N-acetyl-alpha-D-muramoyl-L-alanyl-D-glutamyl-meso-2,6-diaminopimeloyl-D-alanyl-D-alanine + UDP-N-acetyl-alpha-D-glucosamine = di-trans,octa-cis-undecaprenyl diphospho-[N-acetyl-alpha-D-glucosaminyl-(1-&gt;4)]-N-acetyl-alpha-D-muramoyl-L-alanyl-D-glutamyl-meso-2,6-diaminopimeloyl-D-alanyl-D-alanine + UDP + H(+)</text>
        <dbReference type="Rhea" id="RHEA:31227"/>
        <dbReference type="ChEBI" id="CHEBI:15378"/>
        <dbReference type="ChEBI" id="CHEBI:57705"/>
        <dbReference type="ChEBI" id="CHEBI:58223"/>
        <dbReference type="ChEBI" id="CHEBI:61387"/>
        <dbReference type="ChEBI" id="CHEBI:61388"/>
        <dbReference type="EC" id="2.4.1.227"/>
    </reaction>
</comment>
<comment type="pathway">
    <text evidence="1">Cell wall biogenesis; peptidoglycan biosynthesis.</text>
</comment>
<comment type="subcellular location">
    <subcellularLocation>
        <location evidence="1">Cell inner membrane</location>
        <topology evidence="1">Peripheral membrane protein</topology>
        <orientation evidence="1">Cytoplasmic side</orientation>
    </subcellularLocation>
</comment>
<comment type="similarity">
    <text evidence="1">Belongs to the glycosyltransferase 28 family. MurG subfamily.</text>
</comment>